<dbReference type="EC" id="6.1.1.4" evidence="1"/>
<dbReference type="EMBL" id="CP000108">
    <property type="protein sequence ID" value="ABB28940.1"/>
    <property type="molecule type" value="Genomic_DNA"/>
</dbReference>
<dbReference type="SMR" id="Q3APY5"/>
<dbReference type="STRING" id="340177.Cag_1688"/>
<dbReference type="KEGG" id="cch:Cag_1688"/>
<dbReference type="eggNOG" id="COG0495">
    <property type="taxonomic scope" value="Bacteria"/>
</dbReference>
<dbReference type="HOGENOM" id="CLU_004427_0_0_10"/>
<dbReference type="OrthoDB" id="9810365at2"/>
<dbReference type="GO" id="GO:0005829">
    <property type="term" value="C:cytosol"/>
    <property type="evidence" value="ECO:0007669"/>
    <property type="project" value="TreeGrafter"/>
</dbReference>
<dbReference type="GO" id="GO:0002161">
    <property type="term" value="F:aminoacyl-tRNA deacylase activity"/>
    <property type="evidence" value="ECO:0007669"/>
    <property type="project" value="InterPro"/>
</dbReference>
<dbReference type="GO" id="GO:0005524">
    <property type="term" value="F:ATP binding"/>
    <property type="evidence" value="ECO:0007669"/>
    <property type="project" value="UniProtKB-UniRule"/>
</dbReference>
<dbReference type="GO" id="GO:0004823">
    <property type="term" value="F:leucine-tRNA ligase activity"/>
    <property type="evidence" value="ECO:0007669"/>
    <property type="project" value="UniProtKB-UniRule"/>
</dbReference>
<dbReference type="GO" id="GO:0006429">
    <property type="term" value="P:leucyl-tRNA aminoacylation"/>
    <property type="evidence" value="ECO:0007669"/>
    <property type="project" value="UniProtKB-UniRule"/>
</dbReference>
<dbReference type="CDD" id="cd07958">
    <property type="entry name" value="Anticodon_Ia_Leu_BEm"/>
    <property type="match status" value="1"/>
</dbReference>
<dbReference type="CDD" id="cd00812">
    <property type="entry name" value="LeuRS_core"/>
    <property type="match status" value="1"/>
</dbReference>
<dbReference type="FunFam" id="3.40.50.620:FF:000056">
    <property type="entry name" value="Leucine--tRNA ligase"/>
    <property type="match status" value="1"/>
</dbReference>
<dbReference type="FunFam" id="3.40.50.620:FF:000077">
    <property type="entry name" value="Leucine--tRNA ligase"/>
    <property type="match status" value="1"/>
</dbReference>
<dbReference type="FunFam" id="1.10.730.10:FF:000011">
    <property type="entry name" value="Leucine--tRNA ligase chloroplastic/mitochondrial"/>
    <property type="match status" value="1"/>
</dbReference>
<dbReference type="Gene3D" id="3.10.20.590">
    <property type="match status" value="1"/>
</dbReference>
<dbReference type="Gene3D" id="3.40.50.620">
    <property type="entry name" value="HUPs"/>
    <property type="match status" value="2"/>
</dbReference>
<dbReference type="Gene3D" id="1.10.730.10">
    <property type="entry name" value="Isoleucyl-tRNA Synthetase, Domain 1"/>
    <property type="match status" value="1"/>
</dbReference>
<dbReference type="HAMAP" id="MF_00049_B">
    <property type="entry name" value="Leu_tRNA_synth_B"/>
    <property type="match status" value="1"/>
</dbReference>
<dbReference type="InterPro" id="IPR002300">
    <property type="entry name" value="aa-tRNA-synth_Ia"/>
</dbReference>
<dbReference type="InterPro" id="IPR002302">
    <property type="entry name" value="Leu-tRNA-ligase"/>
</dbReference>
<dbReference type="InterPro" id="IPR025709">
    <property type="entry name" value="Leu_tRNA-synth_edit"/>
</dbReference>
<dbReference type="InterPro" id="IPR013155">
    <property type="entry name" value="M/V/L/I-tRNA-synth_anticd-bd"/>
</dbReference>
<dbReference type="InterPro" id="IPR015413">
    <property type="entry name" value="Methionyl/Leucyl_tRNA_Synth"/>
</dbReference>
<dbReference type="InterPro" id="IPR014729">
    <property type="entry name" value="Rossmann-like_a/b/a_fold"/>
</dbReference>
<dbReference type="InterPro" id="IPR009080">
    <property type="entry name" value="tRNAsynth_Ia_anticodon-bd"/>
</dbReference>
<dbReference type="InterPro" id="IPR009008">
    <property type="entry name" value="Val/Leu/Ile-tRNA-synth_edit"/>
</dbReference>
<dbReference type="NCBIfam" id="TIGR00396">
    <property type="entry name" value="leuS_bact"/>
    <property type="match status" value="1"/>
</dbReference>
<dbReference type="PANTHER" id="PTHR43740:SF2">
    <property type="entry name" value="LEUCINE--TRNA LIGASE, MITOCHONDRIAL"/>
    <property type="match status" value="1"/>
</dbReference>
<dbReference type="PANTHER" id="PTHR43740">
    <property type="entry name" value="LEUCYL-TRNA SYNTHETASE"/>
    <property type="match status" value="1"/>
</dbReference>
<dbReference type="Pfam" id="PF08264">
    <property type="entry name" value="Anticodon_1"/>
    <property type="match status" value="1"/>
</dbReference>
<dbReference type="Pfam" id="PF00133">
    <property type="entry name" value="tRNA-synt_1"/>
    <property type="match status" value="1"/>
</dbReference>
<dbReference type="Pfam" id="PF13603">
    <property type="entry name" value="tRNA-synt_1_2"/>
    <property type="match status" value="1"/>
</dbReference>
<dbReference type="Pfam" id="PF09334">
    <property type="entry name" value="tRNA-synt_1g"/>
    <property type="match status" value="1"/>
</dbReference>
<dbReference type="PRINTS" id="PR00985">
    <property type="entry name" value="TRNASYNTHLEU"/>
</dbReference>
<dbReference type="SUPFAM" id="SSF47323">
    <property type="entry name" value="Anticodon-binding domain of a subclass of class I aminoacyl-tRNA synthetases"/>
    <property type="match status" value="1"/>
</dbReference>
<dbReference type="SUPFAM" id="SSF52374">
    <property type="entry name" value="Nucleotidylyl transferase"/>
    <property type="match status" value="1"/>
</dbReference>
<dbReference type="SUPFAM" id="SSF50677">
    <property type="entry name" value="ValRS/IleRS/LeuRS editing domain"/>
    <property type="match status" value="1"/>
</dbReference>
<accession>Q3APY5</accession>
<sequence length="805" mass="92007">MKYDFTSIEKKWQTRWQAEATFATGTDHSKPKYYVLDMFPYPSGSGLHVGHLEGYTASDIIARYKRSSGYNVLHPMGWDAFGLPAEQFAIKTGTHPRITTEANVKNFKGTLQAMGFSYDWEREINTTDSGYFKWTQWIFLQLYDRGLAYMSEVDVNWCEELKTVLANEEVDEKLADGYTVVRRPLRQWVLKITAYAERLLADLEELDWPENVKQMQRNWIGRSEGVEIDFELRCHRTTLKAYTTRPDTLFGATYLVIAPEHPMAEKLATAPQLLVVKEYITKAKLKSDLERTGLQKEKSGVFTGSYAINPATGQPLPIWISDFVLISYGTGAIMSVPAHDSRDWAFAKQYNLPIIEVIKSPHDVQEAVFEEKNSTCVNSANDEISLNGLDFATAFERMATWLESKKVGKRKVNYKLRDWIFSRQRYWGEPIPIKHYEDGTIRPETNLPLELPAVEAYHPTSTGESPLANITEWLIGNDEHGAFRRETNTMPQWAGSCWYYLRFIDPHNHAQVVDGNNERYWMNVDLYIGGAEHAVLHLLYSRFWHKVLYDLGVVSTKEPFQKLFNQGMILGEDNEKMSKSRGNVIPADHVLQRYGADAVRLYEMFLGPLEQVKPWNTNGIEGISRFLGKVWRFVYPEHSEAATQPSNEPLPDELLRRMHKTIKKVGDDTSSLKFNTAIAEMMVFVNELTKTGCNNREAIETLLKLLAPYAPHMTEELWEALGHTNSISHEPFPTFNPALVEENMAIIAVQVNGKLRGTFTVPAKSPKEMLLEEARKVESVAKFLEGKTIVKEIVVPDKLVNFAVK</sequence>
<keyword id="KW-0030">Aminoacyl-tRNA synthetase</keyword>
<keyword id="KW-0067">ATP-binding</keyword>
<keyword id="KW-0963">Cytoplasm</keyword>
<keyword id="KW-0436">Ligase</keyword>
<keyword id="KW-0547">Nucleotide-binding</keyword>
<keyword id="KW-0648">Protein biosynthesis</keyword>
<proteinExistence type="inferred from homology"/>
<feature type="chain" id="PRO_1000009320" description="Leucine--tRNA ligase">
    <location>
        <begin position="1"/>
        <end position="805"/>
    </location>
</feature>
<feature type="short sequence motif" description="'HIGH' region">
    <location>
        <begin position="40"/>
        <end position="51"/>
    </location>
</feature>
<feature type="short sequence motif" description="'KMSKS' region">
    <location>
        <begin position="576"/>
        <end position="580"/>
    </location>
</feature>
<feature type="binding site" evidence="1">
    <location>
        <position position="579"/>
    </location>
    <ligand>
        <name>ATP</name>
        <dbReference type="ChEBI" id="CHEBI:30616"/>
    </ligand>
</feature>
<protein>
    <recommendedName>
        <fullName evidence="1">Leucine--tRNA ligase</fullName>
        <ecNumber evidence="1">6.1.1.4</ecNumber>
    </recommendedName>
    <alternativeName>
        <fullName evidence="1">Leucyl-tRNA synthetase</fullName>
        <shortName evidence="1">LeuRS</shortName>
    </alternativeName>
</protein>
<gene>
    <name evidence="1" type="primary">leuS</name>
    <name type="ordered locus">Cag_1688</name>
</gene>
<reference key="1">
    <citation type="submission" date="2005-08" db="EMBL/GenBank/DDBJ databases">
        <title>Complete sequence of Chlorobium chlorochromatii CaD3.</title>
        <authorList>
            <consortium name="US DOE Joint Genome Institute"/>
            <person name="Copeland A."/>
            <person name="Lucas S."/>
            <person name="Lapidus A."/>
            <person name="Barry K."/>
            <person name="Detter J.C."/>
            <person name="Glavina T."/>
            <person name="Hammon N."/>
            <person name="Israni S."/>
            <person name="Pitluck S."/>
            <person name="Bryant D."/>
            <person name="Schmutz J."/>
            <person name="Larimer F."/>
            <person name="Land M."/>
            <person name="Kyrpides N."/>
            <person name="Ivanova N."/>
            <person name="Richardson P."/>
        </authorList>
    </citation>
    <scope>NUCLEOTIDE SEQUENCE [LARGE SCALE GENOMIC DNA]</scope>
    <source>
        <strain>CaD3</strain>
    </source>
</reference>
<evidence type="ECO:0000255" key="1">
    <source>
        <dbReference type="HAMAP-Rule" id="MF_00049"/>
    </source>
</evidence>
<comment type="catalytic activity">
    <reaction evidence="1">
        <text>tRNA(Leu) + L-leucine + ATP = L-leucyl-tRNA(Leu) + AMP + diphosphate</text>
        <dbReference type="Rhea" id="RHEA:11688"/>
        <dbReference type="Rhea" id="RHEA-COMP:9613"/>
        <dbReference type="Rhea" id="RHEA-COMP:9622"/>
        <dbReference type="ChEBI" id="CHEBI:30616"/>
        <dbReference type="ChEBI" id="CHEBI:33019"/>
        <dbReference type="ChEBI" id="CHEBI:57427"/>
        <dbReference type="ChEBI" id="CHEBI:78442"/>
        <dbReference type="ChEBI" id="CHEBI:78494"/>
        <dbReference type="ChEBI" id="CHEBI:456215"/>
        <dbReference type="EC" id="6.1.1.4"/>
    </reaction>
</comment>
<comment type="subcellular location">
    <subcellularLocation>
        <location evidence="1">Cytoplasm</location>
    </subcellularLocation>
</comment>
<comment type="similarity">
    <text evidence="1">Belongs to the class-I aminoacyl-tRNA synthetase family.</text>
</comment>
<name>SYL_CHLCH</name>
<organism>
    <name type="scientific">Chlorobium chlorochromatii (strain CaD3)</name>
    <dbReference type="NCBI Taxonomy" id="340177"/>
    <lineage>
        <taxon>Bacteria</taxon>
        <taxon>Pseudomonadati</taxon>
        <taxon>Chlorobiota</taxon>
        <taxon>Chlorobiia</taxon>
        <taxon>Chlorobiales</taxon>
        <taxon>Chlorobiaceae</taxon>
        <taxon>Chlorobium/Pelodictyon group</taxon>
        <taxon>Chlorobium</taxon>
    </lineage>
</organism>